<gene>
    <name type="ordered locus">lin1778</name>
</gene>
<evidence type="ECO:0000255" key="1">
    <source>
        <dbReference type="HAMAP-Rule" id="MF_00386"/>
    </source>
</evidence>
<evidence type="ECO:0000256" key="2">
    <source>
        <dbReference type="SAM" id="MobiDB-lite"/>
    </source>
</evidence>
<feature type="chain" id="PRO_0000171837" description="Putative membrane protein insertion efficiency factor">
    <location>
        <begin position="1"/>
        <end position="88"/>
    </location>
</feature>
<feature type="region of interest" description="Disordered" evidence="2">
    <location>
        <begin position="65"/>
        <end position="88"/>
    </location>
</feature>
<feature type="compositionally biased region" description="Basic and acidic residues" evidence="2">
    <location>
        <begin position="69"/>
        <end position="80"/>
    </location>
</feature>
<reference key="1">
    <citation type="journal article" date="2001" name="Science">
        <title>Comparative genomics of Listeria species.</title>
        <authorList>
            <person name="Glaser P."/>
            <person name="Frangeul L."/>
            <person name="Buchrieser C."/>
            <person name="Rusniok C."/>
            <person name="Amend A."/>
            <person name="Baquero F."/>
            <person name="Berche P."/>
            <person name="Bloecker H."/>
            <person name="Brandt P."/>
            <person name="Chakraborty T."/>
            <person name="Charbit A."/>
            <person name="Chetouani F."/>
            <person name="Couve E."/>
            <person name="de Daruvar A."/>
            <person name="Dehoux P."/>
            <person name="Domann E."/>
            <person name="Dominguez-Bernal G."/>
            <person name="Duchaud E."/>
            <person name="Durant L."/>
            <person name="Dussurget O."/>
            <person name="Entian K.-D."/>
            <person name="Fsihi H."/>
            <person name="Garcia-del Portillo F."/>
            <person name="Garrido P."/>
            <person name="Gautier L."/>
            <person name="Goebel W."/>
            <person name="Gomez-Lopez N."/>
            <person name="Hain T."/>
            <person name="Hauf J."/>
            <person name="Jackson D."/>
            <person name="Jones L.-M."/>
            <person name="Kaerst U."/>
            <person name="Kreft J."/>
            <person name="Kuhn M."/>
            <person name="Kunst F."/>
            <person name="Kurapkat G."/>
            <person name="Madueno E."/>
            <person name="Maitournam A."/>
            <person name="Mata Vicente J."/>
            <person name="Ng E."/>
            <person name="Nedjari H."/>
            <person name="Nordsiek G."/>
            <person name="Novella S."/>
            <person name="de Pablos B."/>
            <person name="Perez-Diaz J.-C."/>
            <person name="Purcell R."/>
            <person name="Remmel B."/>
            <person name="Rose M."/>
            <person name="Schlueter T."/>
            <person name="Simoes N."/>
            <person name="Tierrez A."/>
            <person name="Vazquez-Boland J.-A."/>
            <person name="Voss H."/>
            <person name="Wehland J."/>
            <person name="Cossart P."/>
        </authorList>
    </citation>
    <scope>NUCLEOTIDE SEQUENCE [LARGE SCALE GENOMIC DNA]</scope>
    <source>
        <strain>ATCC BAA-680 / CLIP 11262</strain>
    </source>
</reference>
<comment type="function">
    <text evidence="1">Could be involved in insertion of integral membrane proteins into the membrane.</text>
</comment>
<comment type="subcellular location">
    <subcellularLocation>
        <location evidence="1">Cell membrane</location>
        <topology evidence="1">Peripheral membrane protein</topology>
        <orientation evidence="1">Cytoplasmic side</orientation>
    </subcellularLocation>
</comment>
<comment type="similarity">
    <text evidence="1">Belongs to the UPF0161 family.</text>
</comment>
<proteinExistence type="inferred from homology"/>
<name>YIDD_LISIN</name>
<accession>Q92AZ0</accession>
<organism>
    <name type="scientific">Listeria innocua serovar 6a (strain ATCC BAA-680 / CLIP 11262)</name>
    <dbReference type="NCBI Taxonomy" id="272626"/>
    <lineage>
        <taxon>Bacteria</taxon>
        <taxon>Bacillati</taxon>
        <taxon>Bacillota</taxon>
        <taxon>Bacilli</taxon>
        <taxon>Bacillales</taxon>
        <taxon>Listeriaceae</taxon>
        <taxon>Listeria</taxon>
    </lineage>
</organism>
<dbReference type="EMBL" id="AL596169">
    <property type="protein sequence ID" value="CAC97009.1"/>
    <property type="molecule type" value="Genomic_DNA"/>
</dbReference>
<dbReference type="PIR" id="AI1654">
    <property type="entry name" value="AI1654"/>
</dbReference>
<dbReference type="RefSeq" id="WP_003762576.1">
    <property type="nucleotide sequence ID" value="NC_003212.1"/>
</dbReference>
<dbReference type="STRING" id="272626.gene:17566109"/>
<dbReference type="GeneID" id="93235091"/>
<dbReference type="KEGG" id="lin:lin1778"/>
<dbReference type="eggNOG" id="COG0759">
    <property type="taxonomic scope" value="Bacteria"/>
</dbReference>
<dbReference type="HOGENOM" id="CLU_144811_6_0_9"/>
<dbReference type="OrthoDB" id="9801753at2"/>
<dbReference type="Proteomes" id="UP000002513">
    <property type="component" value="Chromosome"/>
</dbReference>
<dbReference type="GO" id="GO:0005886">
    <property type="term" value="C:plasma membrane"/>
    <property type="evidence" value="ECO:0007669"/>
    <property type="project" value="UniProtKB-SubCell"/>
</dbReference>
<dbReference type="HAMAP" id="MF_00386">
    <property type="entry name" value="UPF0161_YidD"/>
    <property type="match status" value="1"/>
</dbReference>
<dbReference type="InterPro" id="IPR002696">
    <property type="entry name" value="Membr_insert_effic_factor_YidD"/>
</dbReference>
<dbReference type="NCBIfam" id="TIGR00278">
    <property type="entry name" value="membrane protein insertion efficiency factor YidD"/>
    <property type="match status" value="1"/>
</dbReference>
<dbReference type="PANTHER" id="PTHR33383">
    <property type="entry name" value="MEMBRANE PROTEIN INSERTION EFFICIENCY FACTOR-RELATED"/>
    <property type="match status" value="1"/>
</dbReference>
<dbReference type="PANTHER" id="PTHR33383:SF1">
    <property type="entry name" value="MEMBRANE PROTEIN INSERTION EFFICIENCY FACTOR-RELATED"/>
    <property type="match status" value="1"/>
</dbReference>
<dbReference type="Pfam" id="PF01809">
    <property type="entry name" value="YidD"/>
    <property type="match status" value="1"/>
</dbReference>
<dbReference type="SMART" id="SM01234">
    <property type="entry name" value="Haemolytic"/>
    <property type="match status" value="1"/>
</dbReference>
<sequence>MKKMLIGGIRLYQKYISRFTPATCRFYPTCSAYGIEAIETHGALKGSYLAIRRISKCHPFHKGGLDFVPPKKDKNDDSGHTCKAHHHH</sequence>
<keyword id="KW-1003">Cell membrane</keyword>
<keyword id="KW-0472">Membrane</keyword>
<protein>
    <recommendedName>
        <fullName evidence="1">Putative membrane protein insertion efficiency factor</fullName>
    </recommendedName>
</protein>